<accession>A0LI63</accession>
<name>SYS_SYNFM</name>
<reference key="1">
    <citation type="submission" date="2006-10" db="EMBL/GenBank/DDBJ databases">
        <title>Complete sequence of Syntrophobacter fumaroxidans MPOB.</title>
        <authorList>
            <consortium name="US DOE Joint Genome Institute"/>
            <person name="Copeland A."/>
            <person name="Lucas S."/>
            <person name="Lapidus A."/>
            <person name="Barry K."/>
            <person name="Detter J.C."/>
            <person name="Glavina del Rio T."/>
            <person name="Hammon N."/>
            <person name="Israni S."/>
            <person name="Pitluck S."/>
            <person name="Goltsman E.G."/>
            <person name="Martinez M."/>
            <person name="Schmutz J."/>
            <person name="Larimer F."/>
            <person name="Land M."/>
            <person name="Hauser L."/>
            <person name="Kyrpides N."/>
            <person name="Kim E."/>
            <person name="Boone D.R."/>
            <person name="Brockman F."/>
            <person name="Culley D."/>
            <person name="Ferry J."/>
            <person name="Gunsalus R."/>
            <person name="McInerney M.J."/>
            <person name="Morrison M."/>
            <person name="Plugge C."/>
            <person name="Rohlin L."/>
            <person name="Scholten J."/>
            <person name="Sieber J."/>
            <person name="Stams A.J.M."/>
            <person name="Worm P."/>
            <person name="Henstra A.M."/>
            <person name="Richardson P."/>
        </authorList>
    </citation>
    <scope>NUCLEOTIDE SEQUENCE [LARGE SCALE GENOMIC DNA]</scope>
    <source>
        <strain>DSM 10017 / MPOB</strain>
    </source>
</reference>
<organism>
    <name type="scientific">Syntrophobacter fumaroxidans (strain DSM 10017 / MPOB)</name>
    <dbReference type="NCBI Taxonomy" id="335543"/>
    <lineage>
        <taxon>Bacteria</taxon>
        <taxon>Pseudomonadati</taxon>
        <taxon>Thermodesulfobacteriota</taxon>
        <taxon>Syntrophobacteria</taxon>
        <taxon>Syntrophobacterales</taxon>
        <taxon>Syntrophobacteraceae</taxon>
        <taxon>Syntrophobacter</taxon>
    </lineage>
</organism>
<protein>
    <recommendedName>
        <fullName evidence="1">Serine--tRNA ligase</fullName>
        <ecNumber evidence="1">6.1.1.11</ecNumber>
    </recommendedName>
    <alternativeName>
        <fullName evidence="1">Seryl-tRNA synthetase</fullName>
        <shortName evidence="1">SerRS</shortName>
    </alternativeName>
    <alternativeName>
        <fullName evidence="1">Seryl-tRNA(Ser/Sec) synthetase</fullName>
    </alternativeName>
</protein>
<keyword id="KW-0030">Aminoacyl-tRNA synthetase</keyword>
<keyword id="KW-0067">ATP-binding</keyword>
<keyword id="KW-0963">Cytoplasm</keyword>
<keyword id="KW-0436">Ligase</keyword>
<keyword id="KW-0547">Nucleotide-binding</keyword>
<keyword id="KW-0648">Protein biosynthesis</keyword>
<keyword id="KW-1185">Reference proteome</keyword>
<feature type="chain" id="PRO_1000019846" description="Serine--tRNA ligase">
    <location>
        <begin position="1"/>
        <end position="423"/>
    </location>
</feature>
<feature type="binding site" evidence="1">
    <location>
        <begin position="230"/>
        <end position="232"/>
    </location>
    <ligand>
        <name>L-serine</name>
        <dbReference type="ChEBI" id="CHEBI:33384"/>
    </ligand>
</feature>
<feature type="binding site" evidence="1">
    <location>
        <begin position="261"/>
        <end position="263"/>
    </location>
    <ligand>
        <name>ATP</name>
        <dbReference type="ChEBI" id="CHEBI:30616"/>
    </ligand>
</feature>
<feature type="binding site" evidence="1">
    <location>
        <position position="284"/>
    </location>
    <ligand>
        <name>L-serine</name>
        <dbReference type="ChEBI" id="CHEBI:33384"/>
    </ligand>
</feature>
<feature type="binding site" evidence="1">
    <location>
        <begin position="348"/>
        <end position="351"/>
    </location>
    <ligand>
        <name>ATP</name>
        <dbReference type="ChEBI" id="CHEBI:30616"/>
    </ligand>
</feature>
<feature type="binding site" evidence="1">
    <location>
        <position position="384"/>
    </location>
    <ligand>
        <name>L-serine</name>
        <dbReference type="ChEBI" id="CHEBI:33384"/>
    </ligand>
</feature>
<gene>
    <name evidence="1" type="primary">serS</name>
    <name type="ordered locus">Sfum_1424</name>
</gene>
<proteinExistence type="inferred from homology"/>
<evidence type="ECO:0000255" key="1">
    <source>
        <dbReference type="HAMAP-Rule" id="MF_00176"/>
    </source>
</evidence>
<dbReference type="EC" id="6.1.1.11" evidence="1"/>
<dbReference type="EMBL" id="CP000478">
    <property type="protein sequence ID" value="ABK17115.1"/>
    <property type="molecule type" value="Genomic_DNA"/>
</dbReference>
<dbReference type="RefSeq" id="WP_011698286.1">
    <property type="nucleotide sequence ID" value="NC_008554.1"/>
</dbReference>
<dbReference type="SMR" id="A0LI63"/>
<dbReference type="FunCoup" id="A0LI63">
    <property type="interactions" value="547"/>
</dbReference>
<dbReference type="STRING" id="335543.Sfum_1424"/>
<dbReference type="KEGG" id="sfu:Sfum_1424"/>
<dbReference type="eggNOG" id="COG0172">
    <property type="taxonomic scope" value="Bacteria"/>
</dbReference>
<dbReference type="HOGENOM" id="CLU_023797_1_1_7"/>
<dbReference type="InParanoid" id="A0LI63"/>
<dbReference type="OrthoDB" id="9804647at2"/>
<dbReference type="UniPathway" id="UPA00906">
    <property type="reaction ID" value="UER00895"/>
</dbReference>
<dbReference type="Proteomes" id="UP000001784">
    <property type="component" value="Chromosome"/>
</dbReference>
<dbReference type="GO" id="GO:0005737">
    <property type="term" value="C:cytoplasm"/>
    <property type="evidence" value="ECO:0007669"/>
    <property type="project" value="UniProtKB-SubCell"/>
</dbReference>
<dbReference type="GO" id="GO:0005524">
    <property type="term" value="F:ATP binding"/>
    <property type="evidence" value="ECO:0007669"/>
    <property type="project" value="UniProtKB-UniRule"/>
</dbReference>
<dbReference type="GO" id="GO:0004828">
    <property type="term" value="F:serine-tRNA ligase activity"/>
    <property type="evidence" value="ECO:0007669"/>
    <property type="project" value="UniProtKB-UniRule"/>
</dbReference>
<dbReference type="GO" id="GO:0016260">
    <property type="term" value="P:selenocysteine biosynthetic process"/>
    <property type="evidence" value="ECO:0007669"/>
    <property type="project" value="UniProtKB-UniRule"/>
</dbReference>
<dbReference type="GO" id="GO:0006434">
    <property type="term" value="P:seryl-tRNA aminoacylation"/>
    <property type="evidence" value="ECO:0007669"/>
    <property type="project" value="UniProtKB-UniRule"/>
</dbReference>
<dbReference type="CDD" id="cd00770">
    <property type="entry name" value="SerRS_core"/>
    <property type="match status" value="1"/>
</dbReference>
<dbReference type="Gene3D" id="3.30.930.10">
    <property type="entry name" value="Bira Bifunctional Protein, Domain 2"/>
    <property type="match status" value="1"/>
</dbReference>
<dbReference type="Gene3D" id="1.10.287.40">
    <property type="entry name" value="Serine-tRNA synthetase, tRNA binding domain"/>
    <property type="match status" value="1"/>
</dbReference>
<dbReference type="HAMAP" id="MF_00176">
    <property type="entry name" value="Ser_tRNA_synth_type1"/>
    <property type="match status" value="1"/>
</dbReference>
<dbReference type="InterPro" id="IPR002314">
    <property type="entry name" value="aa-tRNA-synt_IIb"/>
</dbReference>
<dbReference type="InterPro" id="IPR006195">
    <property type="entry name" value="aa-tRNA-synth_II"/>
</dbReference>
<dbReference type="InterPro" id="IPR045864">
    <property type="entry name" value="aa-tRNA-synth_II/BPL/LPL"/>
</dbReference>
<dbReference type="InterPro" id="IPR002317">
    <property type="entry name" value="Ser-tRNA-ligase_type_1"/>
</dbReference>
<dbReference type="InterPro" id="IPR015866">
    <property type="entry name" value="Ser-tRNA-synth_1_N"/>
</dbReference>
<dbReference type="InterPro" id="IPR042103">
    <property type="entry name" value="SerRS_1_N_sf"/>
</dbReference>
<dbReference type="InterPro" id="IPR033729">
    <property type="entry name" value="SerRS_core"/>
</dbReference>
<dbReference type="InterPro" id="IPR010978">
    <property type="entry name" value="tRNA-bd_arm"/>
</dbReference>
<dbReference type="NCBIfam" id="TIGR00414">
    <property type="entry name" value="serS"/>
    <property type="match status" value="1"/>
</dbReference>
<dbReference type="PANTHER" id="PTHR43697:SF1">
    <property type="entry name" value="SERINE--TRNA LIGASE"/>
    <property type="match status" value="1"/>
</dbReference>
<dbReference type="PANTHER" id="PTHR43697">
    <property type="entry name" value="SERYL-TRNA SYNTHETASE"/>
    <property type="match status" value="1"/>
</dbReference>
<dbReference type="Pfam" id="PF02403">
    <property type="entry name" value="Seryl_tRNA_N"/>
    <property type="match status" value="1"/>
</dbReference>
<dbReference type="Pfam" id="PF00587">
    <property type="entry name" value="tRNA-synt_2b"/>
    <property type="match status" value="1"/>
</dbReference>
<dbReference type="PIRSF" id="PIRSF001529">
    <property type="entry name" value="Ser-tRNA-synth_IIa"/>
    <property type="match status" value="1"/>
</dbReference>
<dbReference type="PRINTS" id="PR00981">
    <property type="entry name" value="TRNASYNTHSER"/>
</dbReference>
<dbReference type="SUPFAM" id="SSF55681">
    <property type="entry name" value="Class II aaRS and biotin synthetases"/>
    <property type="match status" value="1"/>
</dbReference>
<dbReference type="SUPFAM" id="SSF46589">
    <property type="entry name" value="tRNA-binding arm"/>
    <property type="match status" value="1"/>
</dbReference>
<dbReference type="PROSITE" id="PS50862">
    <property type="entry name" value="AA_TRNA_LIGASE_II"/>
    <property type="match status" value="1"/>
</dbReference>
<comment type="function">
    <text evidence="1">Catalyzes the attachment of serine to tRNA(Ser). Is also able to aminoacylate tRNA(Sec) with serine, to form the misacylated tRNA L-seryl-tRNA(Sec), which will be further converted into selenocysteinyl-tRNA(Sec).</text>
</comment>
<comment type="catalytic activity">
    <reaction evidence="1">
        <text>tRNA(Ser) + L-serine + ATP = L-seryl-tRNA(Ser) + AMP + diphosphate + H(+)</text>
        <dbReference type="Rhea" id="RHEA:12292"/>
        <dbReference type="Rhea" id="RHEA-COMP:9669"/>
        <dbReference type="Rhea" id="RHEA-COMP:9703"/>
        <dbReference type="ChEBI" id="CHEBI:15378"/>
        <dbReference type="ChEBI" id="CHEBI:30616"/>
        <dbReference type="ChEBI" id="CHEBI:33019"/>
        <dbReference type="ChEBI" id="CHEBI:33384"/>
        <dbReference type="ChEBI" id="CHEBI:78442"/>
        <dbReference type="ChEBI" id="CHEBI:78533"/>
        <dbReference type="ChEBI" id="CHEBI:456215"/>
        <dbReference type="EC" id="6.1.1.11"/>
    </reaction>
</comment>
<comment type="catalytic activity">
    <reaction evidence="1">
        <text>tRNA(Sec) + L-serine + ATP = L-seryl-tRNA(Sec) + AMP + diphosphate + H(+)</text>
        <dbReference type="Rhea" id="RHEA:42580"/>
        <dbReference type="Rhea" id="RHEA-COMP:9742"/>
        <dbReference type="Rhea" id="RHEA-COMP:10128"/>
        <dbReference type="ChEBI" id="CHEBI:15378"/>
        <dbReference type="ChEBI" id="CHEBI:30616"/>
        <dbReference type="ChEBI" id="CHEBI:33019"/>
        <dbReference type="ChEBI" id="CHEBI:33384"/>
        <dbReference type="ChEBI" id="CHEBI:78442"/>
        <dbReference type="ChEBI" id="CHEBI:78533"/>
        <dbReference type="ChEBI" id="CHEBI:456215"/>
        <dbReference type="EC" id="6.1.1.11"/>
    </reaction>
</comment>
<comment type="pathway">
    <text evidence="1">Aminoacyl-tRNA biosynthesis; selenocysteinyl-tRNA(Sec) biosynthesis; L-seryl-tRNA(Sec) from L-serine and tRNA(Sec): step 1/1.</text>
</comment>
<comment type="subunit">
    <text evidence="1">Homodimer. The tRNA molecule binds across the dimer.</text>
</comment>
<comment type="subcellular location">
    <subcellularLocation>
        <location evidence="1">Cytoplasm</location>
    </subcellularLocation>
</comment>
<comment type="domain">
    <text evidence="1">Consists of two distinct domains, a catalytic core and a N-terminal extension that is involved in tRNA binding.</text>
</comment>
<comment type="similarity">
    <text evidence="1">Belongs to the class-II aminoacyl-tRNA synthetase family. Type-1 seryl-tRNA synthetase subfamily.</text>
</comment>
<sequence length="423" mass="48625">MLDLRFVRDNVDKIDMMLRNRRMDLSLAPLIELDTQRRRILREVEELKFRRNKASEEISNLKREKKDSSLLIEEMKEVSRRVKTLDQELTVIEEHFRDFLLLIPNMPHESVPVGADEKDNPVAKTWGSKPELDFEPKPHWEIGEALGILDFERAAKIAGARFALYWKMGAALERALIAFMLDIHTKRHGYTEVLPPFIVNSTSLLGTGQLPKFKEDLFKLEDRDFYLVPTAEVPVTNIHMNETLEESELPKLYTAFTPCFRSEAGSYGKDTRGLIRQHQFNKVELVKLVKPESSYEELEKLLLDAERILQELGLHYRVVTLCTGDMGFSSAKTYDIEVWLPGQNTYREISSCSNFEDFQARRANIRFRRKGQSKTEFVHTLNGSGLAVGRTLVAILENGQQADGSVSIPPALRPYLGNIERID</sequence>